<protein>
    <recommendedName>
        <fullName>Protein jagged-1a</fullName>
        <shortName>Jagged1</shortName>
        <shortName>Jagged1a</shortName>
    </recommendedName>
</protein>
<comment type="function">
    <text evidence="1">Ligand for multiple Notch receptors and involved in the mediation of Notch signaling (By similarity). Seems to be involved in cell-fate decisions.</text>
</comment>
<comment type="subcellular location">
    <subcellularLocation>
        <location evidence="1">Membrane</location>
        <topology evidence="1">Single-pass type I membrane protein</topology>
    </subcellularLocation>
    <subcellularLocation>
        <location evidence="2">Cell membrane</location>
    </subcellularLocation>
</comment>
<accession>Q90Y57</accession>
<feature type="signal peptide" evidence="3">
    <location>
        <begin position="1"/>
        <end position="28"/>
    </location>
</feature>
<feature type="chain" id="PRO_0000007628" description="Protein jagged-1a">
    <location>
        <begin position="29"/>
        <end position="1242"/>
    </location>
</feature>
<feature type="topological domain" description="Extracellular" evidence="3">
    <location>
        <begin position="29"/>
        <end position="1070"/>
    </location>
</feature>
<feature type="transmembrane region" description="Helical" evidence="3">
    <location>
        <begin position="1071"/>
        <end position="1095"/>
    </location>
</feature>
<feature type="topological domain" description="Cytoplasmic" evidence="3">
    <location>
        <begin position="1096"/>
        <end position="1242"/>
    </location>
</feature>
<feature type="domain" description="DSL" evidence="5">
    <location>
        <begin position="186"/>
        <end position="230"/>
    </location>
</feature>
<feature type="domain" description="EGF-like 1" evidence="4">
    <location>
        <begin position="231"/>
        <end position="264"/>
    </location>
</feature>
<feature type="domain" description="EGF-like 2; atypical" evidence="4">
    <location>
        <begin position="265"/>
        <end position="295"/>
    </location>
</feature>
<feature type="domain" description="EGF-like 3" evidence="4">
    <location>
        <begin position="297"/>
        <end position="335"/>
    </location>
</feature>
<feature type="domain" description="EGF-like 4" evidence="4">
    <location>
        <begin position="337"/>
        <end position="373"/>
    </location>
</feature>
<feature type="domain" description="EGF-like 5; calcium-binding" evidence="4">
    <location>
        <begin position="375"/>
        <end position="411"/>
    </location>
</feature>
<feature type="domain" description="EGF-like 6; calcium-binding" evidence="4">
    <location>
        <begin position="413"/>
        <end position="449"/>
    </location>
</feature>
<feature type="domain" description="EGF-like 7; calcium-binding" evidence="4">
    <location>
        <begin position="451"/>
        <end position="486"/>
    </location>
</feature>
<feature type="domain" description="EGF-like 8; calcium-binding" evidence="4">
    <location>
        <begin position="488"/>
        <end position="524"/>
    </location>
</feature>
<feature type="domain" description="EGF-like 9" evidence="4">
    <location>
        <begin position="526"/>
        <end position="562"/>
    </location>
</feature>
<feature type="domain" description="EGF-like 10" evidence="4">
    <location>
        <begin position="575"/>
        <end position="630"/>
    </location>
</feature>
<feature type="domain" description="EGF-like 11; calcium-binding" evidence="4">
    <location>
        <begin position="632"/>
        <end position="668"/>
    </location>
</feature>
<feature type="domain" description="EGF-like 12; calcium-binding" evidence="4">
    <location>
        <begin position="670"/>
        <end position="706"/>
    </location>
</feature>
<feature type="domain" description="EGF-like 13" evidence="4">
    <location>
        <begin position="708"/>
        <end position="744"/>
    </location>
</feature>
<feature type="domain" description="EGF-like 14" evidence="4">
    <location>
        <begin position="747"/>
        <end position="783"/>
    </location>
</feature>
<feature type="domain" description="EGF-like 15; calcium-binding" evidence="4">
    <location>
        <begin position="785"/>
        <end position="821"/>
    </location>
</feature>
<feature type="domain" description="EGF-like 16; calcium-binding" evidence="4">
    <location>
        <begin position="823"/>
        <end position="859"/>
    </location>
</feature>
<feature type="domain" description="EGF-like 17" evidence="4">
    <location>
        <begin position="917"/>
        <end position="959"/>
    </location>
</feature>
<feature type="region of interest" description="Disordered" evidence="6">
    <location>
        <begin position="1191"/>
        <end position="1242"/>
    </location>
</feature>
<feature type="compositionally biased region" description="Basic and acidic residues" evidence="6">
    <location>
        <begin position="1210"/>
        <end position="1232"/>
    </location>
</feature>
<feature type="glycosylation site" description="N-linked (GlcNAc...) asparagine" evidence="3">
    <location>
        <position position="141"/>
    </location>
</feature>
<feature type="glycosylation site" description="N-linked (GlcNAc...) asparagine" evidence="3">
    <location>
        <position position="218"/>
    </location>
</feature>
<feature type="glycosylation site" description="N-linked (GlcNAc...) asparagine" evidence="3">
    <location>
        <position position="385"/>
    </location>
</feature>
<feature type="glycosylation site" description="N-linked (GlcNAc...) asparagine" evidence="3">
    <location>
        <position position="560"/>
    </location>
</feature>
<feature type="glycosylation site" description="N-linked (GlcNAc...) asparagine" evidence="3">
    <location>
        <position position="748"/>
    </location>
</feature>
<feature type="glycosylation site" description="N-linked (GlcNAc...) asparagine" evidence="3">
    <location>
        <position position="960"/>
    </location>
</feature>
<feature type="glycosylation site" description="N-linked (GlcNAc...) asparagine" evidence="3">
    <location>
        <position position="991"/>
    </location>
</feature>
<feature type="glycosylation site" description="N-linked (GlcNAc...) asparagine" evidence="3">
    <location>
        <position position="1046"/>
    </location>
</feature>
<feature type="disulfide bond" evidence="1">
    <location>
        <begin position="188"/>
        <end position="197"/>
    </location>
</feature>
<feature type="disulfide bond" evidence="1">
    <location>
        <begin position="201"/>
        <end position="213"/>
    </location>
</feature>
<feature type="disulfide bond" evidence="1">
    <location>
        <begin position="221"/>
        <end position="230"/>
    </location>
</feature>
<feature type="disulfide bond" evidence="1">
    <location>
        <begin position="235"/>
        <end position="246"/>
    </location>
</feature>
<feature type="disulfide bond" evidence="1">
    <location>
        <begin position="239"/>
        <end position="252"/>
    </location>
</feature>
<feature type="disulfide bond" evidence="1">
    <location>
        <begin position="254"/>
        <end position="263"/>
    </location>
</feature>
<feature type="disulfide bond" evidence="1">
    <location>
        <begin position="266"/>
        <end position="277"/>
    </location>
</feature>
<feature type="disulfide bond" evidence="1">
    <location>
        <begin position="272"/>
        <end position="283"/>
    </location>
</feature>
<feature type="disulfide bond" evidence="1">
    <location>
        <begin position="285"/>
        <end position="294"/>
    </location>
</feature>
<feature type="disulfide bond" evidence="1">
    <location>
        <begin position="301"/>
        <end position="313"/>
    </location>
</feature>
<feature type="disulfide bond" evidence="1">
    <location>
        <begin position="307"/>
        <end position="323"/>
    </location>
</feature>
<feature type="disulfide bond" evidence="1">
    <location>
        <begin position="325"/>
        <end position="334"/>
    </location>
</feature>
<feature type="disulfide bond" evidence="1">
    <location>
        <begin position="341"/>
        <end position="352"/>
    </location>
</feature>
<feature type="disulfide bond" evidence="1">
    <location>
        <begin position="346"/>
        <end position="361"/>
    </location>
</feature>
<feature type="disulfide bond" evidence="1">
    <location>
        <begin position="363"/>
        <end position="372"/>
    </location>
</feature>
<feature type="disulfide bond" evidence="1">
    <location>
        <begin position="379"/>
        <end position="390"/>
    </location>
</feature>
<feature type="disulfide bond" evidence="1">
    <location>
        <begin position="384"/>
        <end position="399"/>
    </location>
</feature>
<feature type="disulfide bond" evidence="1">
    <location>
        <begin position="401"/>
        <end position="410"/>
    </location>
</feature>
<feature type="disulfide bond" evidence="1">
    <location>
        <begin position="417"/>
        <end position="428"/>
    </location>
</feature>
<feature type="disulfide bond" evidence="1">
    <location>
        <begin position="422"/>
        <end position="437"/>
    </location>
</feature>
<feature type="disulfide bond" evidence="1">
    <location>
        <begin position="439"/>
        <end position="448"/>
    </location>
</feature>
<feature type="disulfide bond" evidence="1">
    <location>
        <begin position="455"/>
        <end position="465"/>
    </location>
</feature>
<feature type="disulfide bond" evidence="1">
    <location>
        <begin position="459"/>
        <end position="474"/>
    </location>
</feature>
<feature type="disulfide bond" evidence="1">
    <location>
        <begin position="476"/>
        <end position="485"/>
    </location>
</feature>
<feature type="disulfide bond" evidence="1">
    <location>
        <begin position="492"/>
        <end position="503"/>
    </location>
</feature>
<feature type="disulfide bond" evidence="1">
    <location>
        <begin position="497"/>
        <end position="512"/>
    </location>
</feature>
<feature type="disulfide bond" evidence="1">
    <location>
        <begin position="514"/>
        <end position="523"/>
    </location>
</feature>
<feature type="disulfide bond" evidence="1">
    <location>
        <begin position="530"/>
        <end position="541"/>
    </location>
</feature>
<feature type="disulfide bond" evidence="1">
    <location>
        <begin position="535"/>
        <end position="550"/>
    </location>
</feature>
<feature type="disulfide bond" evidence="1">
    <location>
        <begin position="552"/>
        <end position="561"/>
    </location>
</feature>
<feature type="disulfide bond" evidence="1">
    <location>
        <begin position="600"/>
        <end position="618"/>
    </location>
</feature>
<feature type="disulfide bond" evidence="1">
    <location>
        <begin position="620"/>
        <end position="629"/>
    </location>
</feature>
<feature type="disulfide bond" evidence="1">
    <location>
        <begin position="636"/>
        <end position="647"/>
    </location>
</feature>
<feature type="disulfide bond" evidence="1">
    <location>
        <begin position="641"/>
        <end position="656"/>
    </location>
</feature>
<feature type="disulfide bond" evidence="1">
    <location>
        <begin position="658"/>
        <end position="667"/>
    </location>
</feature>
<feature type="disulfide bond" evidence="1">
    <location>
        <begin position="674"/>
        <end position="685"/>
    </location>
</feature>
<feature type="disulfide bond" evidence="1">
    <location>
        <begin position="679"/>
        <end position="694"/>
    </location>
</feature>
<feature type="disulfide bond" evidence="1">
    <location>
        <begin position="696"/>
        <end position="705"/>
    </location>
</feature>
<feature type="disulfide bond" evidence="1">
    <location>
        <begin position="712"/>
        <end position="723"/>
    </location>
</feature>
<feature type="disulfide bond" evidence="1">
    <location>
        <begin position="717"/>
        <end position="732"/>
    </location>
</feature>
<feature type="disulfide bond" evidence="1">
    <location>
        <begin position="734"/>
        <end position="743"/>
    </location>
</feature>
<feature type="disulfide bond" evidence="1">
    <location>
        <begin position="751"/>
        <end position="762"/>
    </location>
</feature>
<feature type="disulfide bond" evidence="1">
    <location>
        <begin position="756"/>
        <end position="771"/>
    </location>
</feature>
<feature type="disulfide bond" evidence="1">
    <location>
        <begin position="773"/>
        <end position="782"/>
    </location>
</feature>
<feature type="disulfide bond" evidence="1">
    <location>
        <begin position="789"/>
        <end position="800"/>
    </location>
</feature>
<feature type="disulfide bond" evidence="1">
    <location>
        <begin position="794"/>
        <end position="809"/>
    </location>
</feature>
<feature type="disulfide bond" evidence="1">
    <location>
        <begin position="811"/>
        <end position="820"/>
    </location>
</feature>
<feature type="disulfide bond" evidence="1">
    <location>
        <begin position="827"/>
        <end position="838"/>
    </location>
</feature>
<feature type="disulfide bond" evidence="1">
    <location>
        <begin position="832"/>
        <end position="847"/>
    </location>
</feature>
<feature type="disulfide bond" evidence="1">
    <location>
        <begin position="849"/>
        <end position="858"/>
    </location>
</feature>
<name>JAG1A_DANRE</name>
<evidence type="ECO:0000250" key="1"/>
<evidence type="ECO:0000250" key="2">
    <source>
        <dbReference type="UniProtKB" id="P78504"/>
    </source>
</evidence>
<evidence type="ECO:0000255" key="3"/>
<evidence type="ECO:0000255" key="4">
    <source>
        <dbReference type="PROSITE-ProRule" id="PRU00076"/>
    </source>
</evidence>
<evidence type="ECO:0000255" key="5">
    <source>
        <dbReference type="PROSITE-ProRule" id="PRU00377"/>
    </source>
</evidence>
<evidence type="ECO:0000256" key="6">
    <source>
        <dbReference type="SAM" id="MobiDB-lite"/>
    </source>
</evidence>
<organism>
    <name type="scientific">Danio rerio</name>
    <name type="common">Zebrafish</name>
    <name type="synonym">Brachydanio rerio</name>
    <dbReference type="NCBI Taxonomy" id="7955"/>
    <lineage>
        <taxon>Eukaryota</taxon>
        <taxon>Metazoa</taxon>
        <taxon>Chordata</taxon>
        <taxon>Craniata</taxon>
        <taxon>Vertebrata</taxon>
        <taxon>Euteleostomi</taxon>
        <taxon>Actinopterygii</taxon>
        <taxon>Neopterygii</taxon>
        <taxon>Teleostei</taxon>
        <taxon>Ostariophysi</taxon>
        <taxon>Cypriniformes</taxon>
        <taxon>Danionidae</taxon>
        <taxon>Danioninae</taxon>
        <taxon>Danio</taxon>
    </lineage>
</organism>
<gene>
    <name type="primary">jag1a</name>
    <name type="synonym">jag1</name>
</gene>
<reference key="1">
    <citation type="submission" date="2000-01" db="EMBL/GenBank/DDBJ databases">
        <title>Isolation, characterization and expression analysis of zebrafish Jagged genes.</title>
        <authorList>
            <person name="Oda T."/>
            <person name="Chandrasekharappa S.C."/>
        </authorList>
    </citation>
    <scope>NUCLEOTIDE SEQUENCE [MRNA]</scope>
</reference>
<keyword id="KW-0106">Calcium</keyword>
<keyword id="KW-1003">Cell membrane</keyword>
<keyword id="KW-0217">Developmental protein</keyword>
<keyword id="KW-1015">Disulfide bond</keyword>
<keyword id="KW-0245">EGF-like domain</keyword>
<keyword id="KW-0325">Glycoprotein</keyword>
<keyword id="KW-0472">Membrane</keyword>
<keyword id="KW-0914">Notch signaling pathway</keyword>
<keyword id="KW-1185">Reference proteome</keyword>
<keyword id="KW-0677">Repeat</keyword>
<keyword id="KW-0732">Signal</keyword>
<keyword id="KW-0812">Transmembrane</keyword>
<keyword id="KW-1133">Transmembrane helix</keyword>
<dbReference type="EMBL" id="AF229448">
    <property type="protein sequence ID" value="AAL08213.1"/>
    <property type="molecule type" value="mRNA"/>
</dbReference>
<dbReference type="RefSeq" id="NP_571936.1">
    <property type="nucleotide sequence ID" value="NM_131861.1"/>
</dbReference>
<dbReference type="SMR" id="Q90Y57"/>
<dbReference type="FunCoup" id="Q90Y57">
    <property type="interactions" value="77"/>
</dbReference>
<dbReference type="STRING" id="7955.ENSDARP00000121170"/>
<dbReference type="GlyCosmos" id="Q90Y57">
    <property type="glycosylation" value="8 sites, No reported glycans"/>
</dbReference>
<dbReference type="PaxDb" id="7955-ENSDARP00000121170"/>
<dbReference type="GeneID" id="140421"/>
<dbReference type="KEGG" id="dre:140421"/>
<dbReference type="AGR" id="ZFIN:ZDB-GENE-011128-2"/>
<dbReference type="CTD" id="140421"/>
<dbReference type="ZFIN" id="ZDB-GENE-011128-2">
    <property type="gene designation" value="jag1a"/>
</dbReference>
<dbReference type="eggNOG" id="KOG1217">
    <property type="taxonomic scope" value="Eukaryota"/>
</dbReference>
<dbReference type="InParanoid" id="Q90Y57"/>
<dbReference type="OrthoDB" id="283575at2759"/>
<dbReference type="SignaLink" id="Q90Y57"/>
<dbReference type="PRO" id="PR:Q90Y57"/>
<dbReference type="Proteomes" id="UP000000437">
    <property type="component" value="Chromosome 1"/>
</dbReference>
<dbReference type="GO" id="GO:0016020">
    <property type="term" value="C:membrane"/>
    <property type="evidence" value="ECO:0000303"/>
    <property type="project" value="ZFIN"/>
</dbReference>
<dbReference type="GO" id="GO:0005886">
    <property type="term" value="C:plasma membrane"/>
    <property type="evidence" value="ECO:0000315"/>
    <property type="project" value="ZFIN"/>
</dbReference>
<dbReference type="GO" id="GO:0005509">
    <property type="term" value="F:calcium ion binding"/>
    <property type="evidence" value="ECO:0007669"/>
    <property type="project" value="InterPro"/>
</dbReference>
<dbReference type="GO" id="GO:0005112">
    <property type="term" value="F:Notch binding"/>
    <property type="evidence" value="ECO:0000318"/>
    <property type="project" value="GO_Central"/>
</dbReference>
<dbReference type="GO" id="GO:0048018">
    <property type="term" value="F:receptor ligand activity"/>
    <property type="evidence" value="ECO:0000304"/>
    <property type="project" value="ZFIN"/>
</dbReference>
<dbReference type="GO" id="GO:0060218">
    <property type="term" value="P:hematopoietic stem cell differentiation"/>
    <property type="evidence" value="ECO:0000315"/>
    <property type="project" value="ZFIN"/>
</dbReference>
<dbReference type="GO" id="GO:0061008">
    <property type="term" value="P:hepaticobiliary system development"/>
    <property type="evidence" value="ECO:0000315"/>
    <property type="project" value="ZFIN"/>
</dbReference>
<dbReference type="GO" id="GO:0007219">
    <property type="term" value="P:Notch signaling pathway"/>
    <property type="evidence" value="ECO:0007669"/>
    <property type="project" value="UniProtKB-KW"/>
</dbReference>
<dbReference type="GO" id="GO:1902038">
    <property type="term" value="P:positive regulation of hematopoietic stem cell differentiation"/>
    <property type="evidence" value="ECO:0000315"/>
    <property type="project" value="ZFIN"/>
</dbReference>
<dbReference type="GO" id="GO:1901222">
    <property type="term" value="P:regulation of non-canonical NF-kappaB signal transduction"/>
    <property type="evidence" value="ECO:0000315"/>
    <property type="project" value="ZFIN"/>
</dbReference>
<dbReference type="GO" id="GO:0030878">
    <property type="term" value="P:thyroid gland development"/>
    <property type="evidence" value="ECO:0000315"/>
    <property type="project" value="ZFIN"/>
</dbReference>
<dbReference type="CDD" id="cd00054">
    <property type="entry name" value="EGF_CA"/>
    <property type="match status" value="13"/>
</dbReference>
<dbReference type="FunFam" id="2.10.25.10:FF:000018">
    <property type="entry name" value="Delta-like 1"/>
    <property type="match status" value="1"/>
</dbReference>
<dbReference type="FunFam" id="2.10.25.10:FF:000007">
    <property type="entry name" value="Delta-like protein"/>
    <property type="match status" value="4"/>
</dbReference>
<dbReference type="FunFam" id="2.10.25.10:FF:000117">
    <property type="entry name" value="Delta-like protein"/>
    <property type="match status" value="1"/>
</dbReference>
<dbReference type="FunFam" id="2.10.25.10:FF:000148">
    <property type="entry name" value="Delta-like protein"/>
    <property type="match status" value="1"/>
</dbReference>
<dbReference type="FunFam" id="2.10.25.10:FF:000181">
    <property type="entry name" value="Delta-like protein"/>
    <property type="match status" value="1"/>
</dbReference>
<dbReference type="FunFam" id="2.10.25.10:FF:000431">
    <property type="entry name" value="Delta-like protein"/>
    <property type="match status" value="1"/>
</dbReference>
<dbReference type="FunFam" id="2.10.25.10:FF:000613">
    <property type="entry name" value="Delta-like protein"/>
    <property type="match status" value="1"/>
</dbReference>
<dbReference type="FunFam" id="2.10.25.140:FF:000001">
    <property type="entry name" value="Delta-like protein"/>
    <property type="match status" value="1"/>
</dbReference>
<dbReference type="FunFam" id="2.60.40.3510:FF:000001">
    <property type="entry name" value="Delta-like protein"/>
    <property type="match status" value="1"/>
</dbReference>
<dbReference type="FunFam" id="2.10.25.10:FF:000143">
    <property type="entry name" value="Protein crumbs 1"/>
    <property type="match status" value="2"/>
</dbReference>
<dbReference type="FunFam" id="2.10.25.10:FF:000472">
    <property type="entry name" value="Uncharacterized protein, isoform A"/>
    <property type="match status" value="1"/>
</dbReference>
<dbReference type="Gene3D" id="2.10.25.140">
    <property type="match status" value="1"/>
</dbReference>
<dbReference type="Gene3D" id="2.60.40.3510">
    <property type="match status" value="1"/>
</dbReference>
<dbReference type="Gene3D" id="2.10.25.10">
    <property type="entry name" value="Laminin"/>
    <property type="match status" value="15"/>
</dbReference>
<dbReference type="InterPro" id="IPR001774">
    <property type="entry name" value="DSL"/>
</dbReference>
<dbReference type="InterPro" id="IPR001881">
    <property type="entry name" value="EGF-like_Ca-bd_dom"/>
</dbReference>
<dbReference type="InterPro" id="IPR013032">
    <property type="entry name" value="EGF-like_CS"/>
</dbReference>
<dbReference type="InterPro" id="IPR000742">
    <property type="entry name" value="EGF-like_dom"/>
</dbReference>
<dbReference type="InterPro" id="IPR000152">
    <property type="entry name" value="EGF-type_Asp/Asn_hydroxyl_site"/>
</dbReference>
<dbReference type="InterPro" id="IPR018097">
    <property type="entry name" value="EGF_Ca-bd_CS"/>
</dbReference>
<dbReference type="InterPro" id="IPR009030">
    <property type="entry name" value="Growth_fac_rcpt_cys_sf"/>
</dbReference>
<dbReference type="InterPro" id="IPR056986">
    <property type="entry name" value="JAG1_1/2_dom"/>
</dbReference>
<dbReference type="InterPro" id="IPR026219">
    <property type="entry name" value="Jagged/Serrate"/>
</dbReference>
<dbReference type="InterPro" id="IPR011651">
    <property type="entry name" value="Notch_ligand_N"/>
</dbReference>
<dbReference type="InterPro" id="IPR001007">
    <property type="entry name" value="VWF_dom"/>
</dbReference>
<dbReference type="PANTHER" id="PTHR12916">
    <property type="entry name" value="CYTOCHROME C OXIDASE POLYPEPTIDE VIC-2"/>
    <property type="match status" value="1"/>
</dbReference>
<dbReference type="PANTHER" id="PTHR12916:SF12">
    <property type="entry name" value="DELTA-LIKE PROTEIN"/>
    <property type="match status" value="1"/>
</dbReference>
<dbReference type="Pfam" id="PF01414">
    <property type="entry name" value="DSL"/>
    <property type="match status" value="1"/>
</dbReference>
<dbReference type="Pfam" id="PF00008">
    <property type="entry name" value="EGF"/>
    <property type="match status" value="6"/>
</dbReference>
<dbReference type="Pfam" id="PF25024">
    <property type="entry name" value="EGF_TEN"/>
    <property type="match status" value="1"/>
</dbReference>
<dbReference type="Pfam" id="PF12661">
    <property type="entry name" value="hEGF"/>
    <property type="match status" value="2"/>
</dbReference>
<dbReference type="Pfam" id="PF23575">
    <property type="entry name" value="JAG1"/>
    <property type="match status" value="1"/>
</dbReference>
<dbReference type="Pfam" id="PF07657">
    <property type="entry name" value="MNNL"/>
    <property type="match status" value="1"/>
</dbReference>
<dbReference type="PRINTS" id="PR00010">
    <property type="entry name" value="EGFBLOOD"/>
</dbReference>
<dbReference type="PRINTS" id="PR02059">
    <property type="entry name" value="JAGGEDFAMILY"/>
</dbReference>
<dbReference type="SMART" id="SM00051">
    <property type="entry name" value="DSL"/>
    <property type="match status" value="1"/>
</dbReference>
<dbReference type="SMART" id="SM00181">
    <property type="entry name" value="EGF"/>
    <property type="match status" value="16"/>
</dbReference>
<dbReference type="SMART" id="SM00179">
    <property type="entry name" value="EGF_CA"/>
    <property type="match status" value="14"/>
</dbReference>
<dbReference type="SMART" id="SM00214">
    <property type="entry name" value="VWC"/>
    <property type="match status" value="1"/>
</dbReference>
<dbReference type="SMART" id="SM00215">
    <property type="entry name" value="VWC_out"/>
    <property type="match status" value="1"/>
</dbReference>
<dbReference type="SUPFAM" id="SSF57196">
    <property type="entry name" value="EGF/Laminin"/>
    <property type="match status" value="4"/>
</dbReference>
<dbReference type="SUPFAM" id="SSF57184">
    <property type="entry name" value="Growth factor receptor domain"/>
    <property type="match status" value="3"/>
</dbReference>
<dbReference type="PROSITE" id="PS00010">
    <property type="entry name" value="ASX_HYDROXYL"/>
    <property type="match status" value="9"/>
</dbReference>
<dbReference type="PROSITE" id="PS51051">
    <property type="entry name" value="DSL"/>
    <property type="match status" value="1"/>
</dbReference>
<dbReference type="PROSITE" id="PS00022">
    <property type="entry name" value="EGF_1"/>
    <property type="match status" value="16"/>
</dbReference>
<dbReference type="PROSITE" id="PS01186">
    <property type="entry name" value="EGF_2"/>
    <property type="match status" value="12"/>
</dbReference>
<dbReference type="PROSITE" id="PS50026">
    <property type="entry name" value="EGF_3"/>
    <property type="match status" value="15"/>
</dbReference>
<dbReference type="PROSITE" id="PS01187">
    <property type="entry name" value="EGF_CA"/>
    <property type="match status" value="8"/>
</dbReference>
<sequence>MILRPSATFAALSAHVLLRCLWMRVCEASGHFEMQVLSMQNVNGELQSGACCDGARDPAERSCAADQCDTFFRVCLKEYQSRVSSGGPCSYGSGSTPVIGGNTFSVKPLDQTNDKTRIVLPFSFAWPRSYTLIVEALDFNNDSSTGSINGQVIEKAVQSGMINPNRQWQVLKHNGPVAQFQYQIRVTCDEHYFGFGCNKFCRPRDDFFGHYTCDHNGNKTCLEGWAGPECNTAICKQGCSIEHGSCKVPGNCRCLYGWQGEYCDQCIPHPGCVHGTCIEPWQCLCDTNWGGQLCDKDLNTCGTLQPCLNGGTCSNTGPDKYHCACPDGYSGQNCERADNACLSEPCLNGGLCVESSLGFECQCAAGWTGPSCNINEDDCSPNPCNHSGVCVDLVDGFKCICPVQWTGKTCLIDANECEESPCVNAHSCRNLIGGYFCECLPGWTGQNCDINVNDCHGQCLNGGLCKDLVNGYRCVCAAGFAGDRCERDVDECASRPCLNGGRCQDTLNGFQCLCPPGFSGATCQLDLDYCESGPCQNGAQCFSLASDYYCKCPEDYEGKNCSQLKDHCLITPCQVIDSCTVAVVSNSTPGGLRLISSSVCGPHGRCRSHSHAGGHFSCDCQDGFTGTYCHENINDCESSPCLSGGTCIDKINAYQCICADGWEGPNCETNIDDCRTNPCRDRGVCRDLVNDFYCECENGWKGKTCHSRESQCDEDTCNNGGTCSDEGDSFKCLCSPGWEGATCNIAKNSSCLPNPCENGATCVVTGDGFTCVCKEGWEGPTCSQNSNDCNPQPCYNSGTCVDGDNWYRCECASGFAGPDCRININECQSSPCAFGSTCVDEINGYRCLCPPGRTGPRCQEVTGRPCVIGGRIAVDGAKWAEDCNTCYCHKGIVTCTKLFCGPKACRMLGSGRGDCPTGQLCVPVRDEQCFVKPCSSQGECWSAHRPAVRTHCQPDSHCANVTFTFNKDTMPQGVTVEQVCRELRHLYVTKNVTSEFSISVSCELSSAASNEIHVAIHVTENGIHGRVPVKEITDNIIDLVSKHSANSSVIGSIAEVRVQRKQPQNPNVDYMVPLLVSVVTAIWVLALASVFLWCIRHHRKQSSSATAINPTSPFSTPEENTANNAREHLNQIKNHIEKNASNGSLPGKELHCDDKNTVNAKIRTQFPESDASRRLQKTRFPHQPAYMLVDRDDRLSSNGTDIKKHPQWTNKRDNRDLESQHRVPDSQHRDSQHSLQKMEYIV</sequence>
<proteinExistence type="evidence at transcript level"/>